<feature type="chain" id="PRO_1000016243" description="ATP phosphoribosyltransferase regulatory subunit">
    <location>
        <begin position="1"/>
        <end position="343"/>
    </location>
</feature>
<feature type="region of interest" description="Disordered" evidence="2">
    <location>
        <begin position="324"/>
        <end position="343"/>
    </location>
</feature>
<feature type="compositionally biased region" description="Basic residues" evidence="2">
    <location>
        <begin position="327"/>
        <end position="343"/>
    </location>
</feature>
<gene>
    <name evidence="1" type="primary">hisZ</name>
    <name type="ordered locus">Anae109_2505</name>
</gene>
<proteinExistence type="inferred from homology"/>
<evidence type="ECO:0000255" key="1">
    <source>
        <dbReference type="HAMAP-Rule" id="MF_00125"/>
    </source>
</evidence>
<evidence type="ECO:0000256" key="2">
    <source>
        <dbReference type="SAM" id="MobiDB-lite"/>
    </source>
</evidence>
<name>HISZ_ANADF</name>
<protein>
    <recommendedName>
        <fullName evidence="1">ATP phosphoribosyltransferase regulatory subunit</fullName>
    </recommendedName>
</protein>
<dbReference type="EMBL" id="CP000769">
    <property type="protein sequence ID" value="ABS26706.1"/>
    <property type="molecule type" value="Genomic_DNA"/>
</dbReference>
<dbReference type="RefSeq" id="WP_012097298.1">
    <property type="nucleotide sequence ID" value="NC_009675.1"/>
</dbReference>
<dbReference type="SMR" id="A7HDB0"/>
<dbReference type="STRING" id="404589.Anae109_2505"/>
<dbReference type="KEGG" id="afw:Anae109_2505"/>
<dbReference type="eggNOG" id="COG3705">
    <property type="taxonomic scope" value="Bacteria"/>
</dbReference>
<dbReference type="HOGENOM" id="CLU_025113_0_3_7"/>
<dbReference type="OrthoDB" id="9800814at2"/>
<dbReference type="UniPathway" id="UPA00031">
    <property type="reaction ID" value="UER00006"/>
</dbReference>
<dbReference type="Proteomes" id="UP000006382">
    <property type="component" value="Chromosome"/>
</dbReference>
<dbReference type="GO" id="GO:0005737">
    <property type="term" value="C:cytoplasm"/>
    <property type="evidence" value="ECO:0007669"/>
    <property type="project" value="UniProtKB-SubCell"/>
</dbReference>
<dbReference type="GO" id="GO:0004821">
    <property type="term" value="F:histidine-tRNA ligase activity"/>
    <property type="evidence" value="ECO:0007669"/>
    <property type="project" value="TreeGrafter"/>
</dbReference>
<dbReference type="GO" id="GO:0006427">
    <property type="term" value="P:histidyl-tRNA aminoacylation"/>
    <property type="evidence" value="ECO:0007669"/>
    <property type="project" value="TreeGrafter"/>
</dbReference>
<dbReference type="GO" id="GO:0000105">
    <property type="term" value="P:L-histidine biosynthetic process"/>
    <property type="evidence" value="ECO:0007669"/>
    <property type="project" value="UniProtKB-UniRule"/>
</dbReference>
<dbReference type="CDD" id="cd00773">
    <property type="entry name" value="HisRS-like_core"/>
    <property type="match status" value="1"/>
</dbReference>
<dbReference type="Gene3D" id="3.30.930.10">
    <property type="entry name" value="Bira Bifunctional Protein, Domain 2"/>
    <property type="match status" value="1"/>
</dbReference>
<dbReference type="HAMAP" id="MF_00125">
    <property type="entry name" value="HisZ"/>
    <property type="match status" value="1"/>
</dbReference>
<dbReference type="InterPro" id="IPR006195">
    <property type="entry name" value="aa-tRNA-synth_II"/>
</dbReference>
<dbReference type="InterPro" id="IPR045864">
    <property type="entry name" value="aa-tRNA-synth_II/BPL/LPL"/>
</dbReference>
<dbReference type="InterPro" id="IPR041715">
    <property type="entry name" value="HisRS-like_core"/>
</dbReference>
<dbReference type="InterPro" id="IPR004516">
    <property type="entry name" value="HisRS/HisZ"/>
</dbReference>
<dbReference type="InterPro" id="IPR004517">
    <property type="entry name" value="HisZ"/>
</dbReference>
<dbReference type="NCBIfam" id="TIGR00443">
    <property type="entry name" value="hisZ_biosyn_reg"/>
    <property type="match status" value="1"/>
</dbReference>
<dbReference type="PANTHER" id="PTHR43707:SF1">
    <property type="entry name" value="HISTIDINE--TRNA LIGASE, MITOCHONDRIAL-RELATED"/>
    <property type="match status" value="1"/>
</dbReference>
<dbReference type="PANTHER" id="PTHR43707">
    <property type="entry name" value="HISTIDYL-TRNA SYNTHETASE"/>
    <property type="match status" value="1"/>
</dbReference>
<dbReference type="Pfam" id="PF13393">
    <property type="entry name" value="tRNA-synt_His"/>
    <property type="match status" value="1"/>
</dbReference>
<dbReference type="PIRSF" id="PIRSF001549">
    <property type="entry name" value="His-tRNA_synth"/>
    <property type="match status" value="1"/>
</dbReference>
<dbReference type="SUPFAM" id="SSF55681">
    <property type="entry name" value="Class II aaRS and biotin synthetases"/>
    <property type="match status" value="1"/>
</dbReference>
<dbReference type="PROSITE" id="PS50862">
    <property type="entry name" value="AA_TRNA_LIGASE_II"/>
    <property type="match status" value="1"/>
</dbReference>
<sequence>MLDLSLPSGLRDLLPDHSAHLAELSAKLQEVFSQFGYRRLFLPTLERLDVVERGLSAAALADVMKFVEPGSGEVVAIRPDITPQIARLYAARPDALPSPARLCYDGPVLRAREARAGRPREVYQAGVELLGAGGASADAEALVVLARALERVGLGSAVVEVGHARFAHAVIDAAGLAPKARGAAWDALSRKDEGALAALARRARGSAGARAALPELATLYGDGALARARALARQVPGAAAALGEVEAALRLARRRGVEAVSVDLGETRGLGYYTGVTFAGYAPGAGSAVAAGGRYDELLARFGRPGPAIGFAVDLEFATQALERANGRAKRPARPRRSPPRPR</sequence>
<organism>
    <name type="scientific">Anaeromyxobacter sp. (strain Fw109-5)</name>
    <dbReference type="NCBI Taxonomy" id="404589"/>
    <lineage>
        <taxon>Bacteria</taxon>
        <taxon>Pseudomonadati</taxon>
        <taxon>Myxococcota</taxon>
        <taxon>Myxococcia</taxon>
        <taxon>Myxococcales</taxon>
        <taxon>Cystobacterineae</taxon>
        <taxon>Anaeromyxobacteraceae</taxon>
        <taxon>Anaeromyxobacter</taxon>
    </lineage>
</organism>
<keyword id="KW-0028">Amino-acid biosynthesis</keyword>
<keyword id="KW-0963">Cytoplasm</keyword>
<keyword id="KW-0368">Histidine biosynthesis</keyword>
<keyword id="KW-1185">Reference proteome</keyword>
<accession>A7HDB0</accession>
<reference key="1">
    <citation type="journal article" date="2015" name="Genome Announc.">
        <title>Complete genome sequence of Anaeromyxobacter sp. Fw109-5, an anaerobic, metal-reducing bacterium isolated from a contaminated subsurface environment.</title>
        <authorList>
            <person name="Hwang C."/>
            <person name="Copeland A."/>
            <person name="Lucas S."/>
            <person name="Lapidus A."/>
            <person name="Barry K."/>
            <person name="Glavina Del Rio T."/>
            <person name="Dalin E."/>
            <person name="Tice H."/>
            <person name="Pitluck S."/>
            <person name="Sims D."/>
            <person name="Brettin T."/>
            <person name="Bruce D.C."/>
            <person name="Detter J.C."/>
            <person name="Han C.S."/>
            <person name="Schmutz J."/>
            <person name="Larimer F.W."/>
            <person name="Land M.L."/>
            <person name="Hauser L.J."/>
            <person name="Kyrpides N."/>
            <person name="Lykidis A."/>
            <person name="Richardson P."/>
            <person name="Belieav A."/>
            <person name="Sanford R.A."/>
            <person name="Loeffler F.E."/>
            <person name="Fields M.W."/>
        </authorList>
    </citation>
    <scope>NUCLEOTIDE SEQUENCE [LARGE SCALE GENOMIC DNA]</scope>
    <source>
        <strain>Fw109-5</strain>
    </source>
</reference>
<comment type="function">
    <text evidence="1">Required for the first step of histidine biosynthesis. May allow the feedback regulation of ATP phosphoribosyltransferase activity by histidine.</text>
</comment>
<comment type="pathway">
    <text evidence="1">Amino-acid biosynthesis; L-histidine biosynthesis; L-histidine from 5-phospho-alpha-D-ribose 1-diphosphate: step 1/9.</text>
</comment>
<comment type="subunit">
    <text evidence="1">Heteromultimer composed of HisG and HisZ subunits.</text>
</comment>
<comment type="subcellular location">
    <subcellularLocation>
        <location evidence="1">Cytoplasm</location>
    </subcellularLocation>
</comment>
<comment type="miscellaneous">
    <text>This function is generally fulfilled by the C-terminal part of HisG, which is missing in some bacteria such as this one.</text>
</comment>
<comment type="similarity">
    <text evidence="1">Belongs to the class-II aminoacyl-tRNA synthetase family. HisZ subfamily.</text>
</comment>